<sequence length="879" mass="96926">MITANEIRRRFLEFYKAHGHEAVRSSSLVPKDDPSLLFTNAGMVQFKKIFLGQEKRAYSRATTSQKCLRVGGKHNDLENVGRTARHHTFFEMLGNFSFGDYFKEDAIKFAWKFLTEELKLPKERLYATVFRDDDEAEQLWLKHSDIPAERIYRMGEKDNFWSMGDTGPCGPCSEILIDQGEHMTCGPDCGIGKCDCDRFLEIWNLVFMQYDQDATGKREPLPKPSIDTGMGLERITAVCQGVFSNFDTDIFQAIIQYTCGLANVSYRSDDETDTALRVIADHSRAIAFMITDGILPSNEGRGYVLRRLIRRAYRFGRLIGLTDTFLHKTALKVVDIMGDDYPELRENSDFMARVVREEEDRFNRTLDKGLSMLEDELATLSASGAAHVPGDIAFRLYDTFGFPLDIVNDIAEKRGFSVDEDGFKALMKEQKERAKAAWKGSGEKDIASRFQPLLEEGMRSEFIGYDHLCGEGRIVALMDEHALAVERLAAGQKGYLVTNRTPFYGASGGQSGDIGTIASPSGKVRVVDTIKPSPELVVHHVEAVEGDILLDQEVDLTVTEDDRVASARNHTCTHLLHAALRRVLGDHVKQAGSLVAPDRLRFDFTHIAPMTPEELAAVEREVNRVIMADIPLETDHMHYDDAVKRGAMALFGEKYGDEVRVVAIADESVELCGGTHLRATGQAGLFLIVSESGVAAGVRRIEALTGWNAMHAVLAQRSEQAQLSAMLKARPGEIVSRVESLQKENRTLRKDMERAAAQATSGQGRNIMDEATDVAGVKLLAAKVEVPNVKALRDLMDDVRSKLVSGIACLAAVDGDKVQLIIAVSKDLQTRFTAPQLIKDVAAEVGGSGGGRPDMAQAGGTNPAGIDAAFAKLRSLIGG</sequence>
<feature type="chain" id="PRO_0000075107" description="Alanine--tRNA ligase">
    <location>
        <begin position="1"/>
        <end position="879"/>
    </location>
</feature>
<feature type="binding site" evidence="1">
    <location>
        <position position="570"/>
    </location>
    <ligand>
        <name>Zn(2+)</name>
        <dbReference type="ChEBI" id="CHEBI:29105"/>
    </ligand>
</feature>
<feature type="binding site" evidence="1">
    <location>
        <position position="574"/>
    </location>
    <ligand>
        <name>Zn(2+)</name>
        <dbReference type="ChEBI" id="CHEBI:29105"/>
    </ligand>
</feature>
<feature type="binding site" evidence="1">
    <location>
        <position position="672"/>
    </location>
    <ligand>
        <name>Zn(2+)</name>
        <dbReference type="ChEBI" id="CHEBI:29105"/>
    </ligand>
</feature>
<feature type="binding site" evidence="1">
    <location>
        <position position="676"/>
    </location>
    <ligand>
        <name>Zn(2+)</name>
        <dbReference type="ChEBI" id="CHEBI:29105"/>
    </ligand>
</feature>
<protein>
    <recommendedName>
        <fullName evidence="1">Alanine--tRNA ligase</fullName>
        <ecNumber evidence="1">6.1.1.7</ecNumber>
    </recommendedName>
    <alternativeName>
        <fullName evidence="1">Alanyl-tRNA synthetase</fullName>
        <shortName evidence="1">AlaRS</shortName>
    </alternativeName>
</protein>
<proteinExistence type="inferred from homology"/>
<evidence type="ECO:0000255" key="1">
    <source>
        <dbReference type="HAMAP-Rule" id="MF_00036"/>
    </source>
</evidence>
<reference key="1">
    <citation type="journal article" date="2004" name="Nat. Biotechnol.">
        <title>The genome sequence of the anaerobic, sulfate-reducing bacterium Desulfovibrio vulgaris Hildenborough.</title>
        <authorList>
            <person name="Heidelberg J.F."/>
            <person name="Seshadri R."/>
            <person name="Haveman S.A."/>
            <person name="Hemme C.L."/>
            <person name="Paulsen I.T."/>
            <person name="Kolonay J.F."/>
            <person name="Eisen J.A."/>
            <person name="Ward N.L."/>
            <person name="Methe B.A."/>
            <person name="Brinkac L.M."/>
            <person name="Daugherty S.C."/>
            <person name="DeBoy R.T."/>
            <person name="Dodson R.J."/>
            <person name="Durkin A.S."/>
            <person name="Madupu R."/>
            <person name="Nelson W.C."/>
            <person name="Sullivan S.A."/>
            <person name="Fouts D.E."/>
            <person name="Haft D.H."/>
            <person name="Selengut J."/>
            <person name="Peterson J.D."/>
            <person name="Davidsen T.M."/>
            <person name="Zafar N."/>
            <person name="Zhou L."/>
            <person name="Radune D."/>
            <person name="Dimitrov G."/>
            <person name="Hance M."/>
            <person name="Tran K."/>
            <person name="Khouri H.M."/>
            <person name="Gill J."/>
            <person name="Utterback T.R."/>
            <person name="Feldblyum T.V."/>
            <person name="Wall J.D."/>
            <person name="Voordouw G."/>
            <person name="Fraser C.M."/>
        </authorList>
    </citation>
    <scope>NUCLEOTIDE SEQUENCE [LARGE SCALE GENOMIC DNA]</scope>
    <source>
        <strain>ATCC 29579 / DSM 644 / CCUG 34227 / NCIMB 8303 / VKM B-1760 / Hildenborough</strain>
    </source>
</reference>
<organism>
    <name type="scientific">Nitratidesulfovibrio vulgaris (strain ATCC 29579 / DSM 644 / CCUG 34227 / NCIMB 8303 / VKM B-1760 / Hildenborough)</name>
    <name type="common">Desulfovibrio vulgaris</name>
    <dbReference type="NCBI Taxonomy" id="882"/>
    <lineage>
        <taxon>Bacteria</taxon>
        <taxon>Pseudomonadati</taxon>
        <taxon>Thermodesulfobacteriota</taxon>
        <taxon>Desulfovibrionia</taxon>
        <taxon>Desulfovibrionales</taxon>
        <taxon>Desulfovibrionaceae</taxon>
        <taxon>Nitratidesulfovibrio</taxon>
    </lineage>
</organism>
<dbReference type="EC" id="6.1.1.7" evidence="1"/>
<dbReference type="EMBL" id="AE017285">
    <property type="protein sequence ID" value="AAS95569.1"/>
    <property type="molecule type" value="Genomic_DNA"/>
</dbReference>
<dbReference type="RefSeq" id="WP_010938388.1">
    <property type="nucleotide sequence ID" value="NC_002937.3"/>
</dbReference>
<dbReference type="RefSeq" id="YP_010310.1">
    <property type="nucleotide sequence ID" value="NC_002937.3"/>
</dbReference>
<dbReference type="SMR" id="P61700"/>
<dbReference type="IntAct" id="P61700">
    <property type="interactions" value="1"/>
</dbReference>
<dbReference type="STRING" id="882.DVU_1089"/>
<dbReference type="PaxDb" id="882-DVU_1089"/>
<dbReference type="EnsemblBacteria" id="AAS95569">
    <property type="protein sequence ID" value="AAS95569"/>
    <property type="gene ID" value="DVU_1089"/>
</dbReference>
<dbReference type="KEGG" id="dvu:DVU_1089"/>
<dbReference type="PATRIC" id="fig|882.5.peg.1027"/>
<dbReference type="eggNOG" id="COG0013">
    <property type="taxonomic scope" value="Bacteria"/>
</dbReference>
<dbReference type="HOGENOM" id="CLU_004485_1_1_7"/>
<dbReference type="OrthoDB" id="9803884at2"/>
<dbReference type="PhylomeDB" id="P61700"/>
<dbReference type="Proteomes" id="UP000002194">
    <property type="component" value="Chromosome"/>
</dbReference>
<dbReference type="GO" id="GO:0005829">
    <property type="term" value="C:cytosol"/>
    <property type="evidence" value="ECO:0007669"/>
    <property type="project" value="TreeGrafter"/>
</dbReference>
<dbReference type="GO" id="GO:0004813">
    <property type="term" value="F:alanine-tRNA ligase activity"/>
    <property type="evidence" value="ECO:0007669"/>
    <property type="project" value="UniProtKB-UniRule"/>
</dbReference>
<dbReference type="GO" id="GO:0002161">
    <property type="term" value="F:aminoacyl-tRNA deacylase activity"/>
    <property type="evidence" value="ECO:0007669"/>
    <property type="project" value="TreeGrafter"/>
</dbReference>
<dbReference type="GO" id="GO:0005524">
    <property type="term" value="F:ATP binding"/>
    <property type="evidence" value="ECO:0007669"/>
    <property type="project" value="UniProtKB-UniRule"/>
</dbReference>
<dbReference type="GO" id="GO:0000049">
    <property type="term" value="F:tRNA binding"/>
    <property type="evidence" value="ECO:0007669"/>
    <property type="project" value="UniProtKB-KW"/>
</dbReference>
<dbReference type="GO" id="GO:0008270">
    <property type="term" value="F:zinc ion binding"/>
    <property type="evidence" value="ECO:0007669"/>
    <property type="project" value="UniProtKB-UniRule"/>
</dbReference>
<dbReference type="GO" id="GO:0006419">
    <property type="term" value="P:alanyl-tRNA aminoacylation"/>
    <property type="evidence" value="ECO:0007669"/>
    <property type="project" value="UniProtKB-UniRule"/>
</dbReference>
<dbReference type="GO" id="GO:0045892">
    <property type="term" value="P:negative regulation of DNA-templated transcription"/>
    <property type="evidence" value="ECO:0007669"/>
    <property type="project" value="TreeGrafter"/>
</dbReference>
<dbReference type="CDD" id="cd00673">
    <property type="entry name" value="AlaRS_core"/>
    <property type="match status" value="1"/>
</dbReference>
<dbReference type="FunFam" id="3.10.310.40:FF:000001">
    <property type="entry name" value="Alanine--tRNA ligase"/>
    <property type="match status" value="1"/>
</dbReference>
<dbReference type="FunFam" id="3.30.54.20:FF:000001">
    <property type="entry name" value="Alanine--tRNA ligase"/>
    <property type="match status" value="1"/>
</dbReference>
<dbReference type="FunFam" id="3.30.930.10:FF:000004">
    <property type="entry name" value="Alanine--tRNA ligase"/>
    <property type="match status" value="1"/>
</dbReference>
<dbReference type="FunFam" id="3.30.980.10:FF:000004">
    <property type="entry name" value="Alanine--tRNA ligase, cytoplasmic"/>
    <property type="match status" value="1"/>
</dbReference>
<dbReference type="Gene3D" id="2.40.30.130">
    <property type="match status" value="1"/>
</dbReference>
<dbReference type="Gene3D" id="3.10.310.40">
    <property type="match status" value="1"/>
</dbReference>
<dbReference type="Gene3D" id="3.30.54.20">
    <property type="match status" value="1"/>
</dbReference>
<dbReference type="Gene3D" id="3.30.930.10">
    <property type="entry name" value="Bira Bifunctional Protein, Domain 2"/>
    <property type="match status" value="1"/>
</dbReference>
<dbReference type="Gene3D" id="3.30.980.10">
    <property type="entry name" value="Threonyl-trna Synthetase, Chain A, domain 2"/>
    <property type="match status" value="1"/>
</dbReference>
<dbReference type="HAMAP" id="MF_00036_B">
    <property type="entry name" value="Ala_tRNA_synth_B"/>
    <property type="match status" value="1"/>
</dbReference>
<dbReference type="InterPro" id="IPR045864">
    <property type="entry name" value="aa-tRNA-synth_II/BPL/LPL"/>
</dbReference>
<dbReference type="InterPro" id="IPR002318">
    <property type="entry name" value="Ala-tRNA-lgiase_IIc"/>
</dbReference>
<dbReference type="InterPro" id="IPR018162">
    <property type="entry name" value="Ala-tRNA-ligase_IIc_anticod-bd"/>
</dbReference>
<dbReference type="InterPro" id="IPR018165">
    <property type="entry name" value="Ala-tRNA-synth_IIc_core"/>
</dbReference>
<dbReference type="InterPro" id="IPR018164">
    <property type="entry name" value="Ala-tRNA-synth_IIc_N"/>
</dbReference>
<dbReference type="InterPro" id="IPR050058">
    <property type="entry name" value="Ala-tRNA_ligase"/>
</dbReference>
<dbReference type="InterPro" id="IPR023033">
    <property type="entry name" value="Ala_tRNA_ligase_euk/bac"/>
</dbReference>
<dbReference type="InterPro" id="IPR003156">
    <property type="entry name" value="DHHA1_dom"/>
</dbReference>
<dbReference type="InterPro" id="IPR018163">
    <property type="entry name" value="Thr/Ala-tRNA-synth_IIc_edit"/>
</dbReference>
<dbReference type="InterPro" id="IPR009000">
    <property type="entry name" value="Transl_B-barrel_sf"/>
</dbReference>
<dbReference type="InterPro" id="IPR012947">
    <property type="entry name" value="tRNA_SAD"/>
</dbReference>
<dbReference type="NCBIfam" id="TIGR00344">
    <property type="entry name" value="alaS"/>
    <property type="match status" value="1"/>
</dbReference>
<dbReference type="PANTHER" id="PTHR11777:SF9">
    <property type="entry name" value="ALANINE--TRNA LIGASE, CYTOPLASMIC"/>
    <property type="match status" value="1"/>
</dbReference>
<dbReference type="PANTHER" id="PTHR11777">
    <property type="entry name" value="ALANYL-TRNA SYNTHETASE"/>
    <property type="match status" value="1"/>
</dbReference>
<dbReference type="Pfam" id="PF02272">
    <property type="entry name" value="DHHA1"/>
    <property type="match status" value="1"/>
</dbReference>
<dbReference type="Pfam" id="PF01411">
    <property type="entry name" value="tRNA-synt_2c"/>
    <property type="match status" value="1"/>
</dbReference>
<dbReference type="Pfam" id="PF07973">
    <property type="entry name" value="tRNA_SAD"/>
    <property type="match status" value="1"/>
</dbReference>
<dbReference type="PRINTS" id="PR00980">
    <property type="entry name" value="TRNASYNTHALA"/>
</dbReference>
<dbReference type="SMART" id="SM00863">
    <property type="entry name" value="tRNA_SAD"/>
    <property type="match status" value="1"/>
</dbReference>
<dbReference type="SUPFAM" id="SSF55681">
    <property type="entry name" value="Class II aaRS and biotin synthetases"/>
    <property type="match status" value="1"/>
</dbReference>
<dbReference type="SUPFAM" id="SSF101353">
    <property type="entry name" value="Putative anticodon-binding domain of alanyl-tRNA synthetase (AlaRS)"/>
    <property type="match status" value="1"/>
</dbReference>
<dbReference type="SUPFAM" id="SSF55186">
    <property type="entry name" value="ThrRS/AlaRS common domain"/>
    <property type="match status" value="1"/>
</dbReference>
<dbReference type="SUPFAM" id="SSF50447">
    <property type="entry name" value="Translation proteins"/>
    <property type="match status" value="1"/>
</dbReference>
<dbReference type="PROSITE" id="PS50860">
    <property type="entry name" value="AA_TRNA_LIGASE_II_ALA"/>
    <property type="match status" value="1"/>
</dbReference>
<comment type="function">
    <text evidence="1">Catalyzes the attachment of alanine to tRNA(Ala) in a two-step reaction: alanine is first activated by ATP to form Ala-AMP and then transferred to the acceptor end of tRNA(Ala). Also edits incorrectly charged Ser-tRNA(Ala) and Gly-tRNA(Ala) via its editing domain.</text>
</comment>
<comment type="catalytic activity">
    <reaction evidence="1">
        <text>tRNA(Ala) + L-alanine + ATP = L-alanyl-tRNA(Ala) + AMP + diphosphate</text>
        <dbReference type="Rhea" id="RHEA:12540"/>
        <dbReference type="Rhea" id="RHEA-COMP:9657"/>
        <dbReference type="Rhea" id="RHEA-COMP:9923"/>
        <dbReference type="ChEBI" id="CHEBI:30616"/>
        <dbReference type="ChEBI" id="CHEBI:33019"/>
        <dbReference type="ChEBI" id="CHEBI:57972"/>
        <dbReference type="ChEBI" id="CHEBI:78442"/>
        <dbReference type="ChEBI" id="CHEBI:78497"/>
        <dbReference type="ChEBI" id="CHEBI:456215"/>
        <dbReference type="EC" id="6.1.1.7"/>
    </reaction>
</comment>
<comment type="cofactor">
    <cofactor evidence="1">
        <name>Zn(2+)</name>
        <dbReference type="ChEBI" id="CHEBI:29105"/>
    </cofactor>
    <text evidence="1">Binds 1 zinc ion per subunit.</text>
</comment>
<comment type="subcellular location">
    <subcellularLocation>
        <location evidence="1">Cytoplasm</location>
    </subcellularLocation>
</comment>
<comment type="domain">
    <text evidence="1">Consists of three domains; the N-terminal catalytic domain, the editing domain and the C-terminal C-Ala domain. The editing domain removes incorrectly charged amino acids, while the C-Ala domain, along with tRNA(Ala), serves as a bridge to cooperatively bring together the editing and aminoacylation centers thus stimulating deacylation of misacylated tRNAs.</text>
</comment>
<comment type="similarity">
    <text evidence="1">Belongs to the class-II aminoacyl-tRNA synthetase family.</text>
</comment>
<accession>P61700</accession>
<keyword id="KW-0030">Aminoacyl-tRNA synthetase</keyword>
<keyword id="KW-0067">ATP-binding</keyword>
<keyword id="KW-0963">Cytoplasm</keyword>
<keyword id="KW-0436">Ligase</keyword>
<keyword id="KW-0479">Metal-binding</keyword>
<keyword id="KW-0547">Nucleotide-binding</keyword>
<keyword id="KW-0648">Protein biosynthesis</keyword>
<keyword id="KW-1185">Reference proteome</keyword>
<keyword id="KW-0694">RNA-binding</keyword>
<keyword id="KW-0820">tRNA-binding</keyword>
<keyword id="KW-0862">Zinc</keyword>
<gene>
    <name evidence="1" type="primary">alaS</name>
    <name type="ordered locus">DVU_1089</name>
</gene>
<name>SYA_NITV2</name>